<comment type="function">
    <text evidence="1">Together with its co-chaperonin GroES, plays an essential role in assisting protein folding. The GroEL-GroES system forms a nano-cage that allows encapsulation of the non-native substrate proteins and provides a physical environment optimized to promote and accelerate protein folding.</text>
</comment>
<comment type="catalytic activity">
    <reaction evidence="1">
        <text>ATP + H2O + a folded polypeptide = ADP + phosphate + an unfolded polypeptide.</text>
        <dbReference type="EC" id="5.6.1.7"/>
    </reaction>
</comment>
<comment type="subunit">
    <text evidence="1">Forms a cylinder of 14 subunits composed of two heptameric rings stacked back-to-back. Interacts with the co-chaperonin GroES.</text>
</comment>
<comment type="subcellular location">
    <subcellularLocation>
        <location evidence="1">Cytoplasm</location>
    </subcellularLocation>
</comment>
<comment type="similarity">
    <text evidence="1">Belongs to the chaperonin (HSP60) family.</text>
</comment>
<sequence>MASKEILFDVKAREKLSRGVDKLANAVKVTLGPKGRNVVIEKSFGSPVITKDGVTVAKEIELEDKFENMGAQMVKEVASKTSDIAGDGTTTATILAQAIYREGVKLVAAGRSPMAIKRGIDKAVEKLVKELGTLAKPTRDQKEIAQIGTISANSDTTIGNIIAEAMAKVGKEGVITVEEAKGLETTLEVVEGMQFDRGYLSPYFVTDPEKMICELDEPFILCNEKKISSMKDMLPVLEQVAKMNRPLVIIAEDVEGEALATLVVNKLRGTLQVVAVKAPGFGDRRKAMLQDIAVLTGGTVVSEDMGVKLENISVADLGTAKRVVVDKENTTIVDGAGKSEDIKARVKQIRAQIDETTSDYDREKLQERLAKLVGGVAVINVGAATETEMKEKKDRVEDALNATRAAVEEGIVPGGGTAYIRISRVLDDVKPADDDEAAGVNIIRRAIEEPLRQISSNAGYEGSIVVEKVRDGKDGFGFNAASGEFEDLIKAGVIDPKKVTRIALQNAASVASLLLTTECAIAEKPEAKKDMPMPGGGMGGMGGMGGMY</sequence>
<feature type="chain" id="PRO_1000130003" description="Chaperonin GroEL">
    <location>
        <begin position="1"/>
        <end position="548"/>
    </location>
</feature>
<feature type="binding site" evidence="1">
    <location>
        <begin position="30"/>
        <end position="33"/>
    </location>
    <ligand>
        <name>ATP</name>
        <dbReference type="ChEBI" id="CHEBI:30616"/>
    </ligand>
</feature>
<feature type="binding site" evidence="1">
    <location>
        <position position="51"/>
    </location>
    <ligand>
        <name>ATP</name>
        <dbReference type="ChEBI" id="CHEBI:30616"/>
    </ligand>
</feature>
<feature type="binding site" evidence="1">
    <location>
        <begin position="87"/>
        <end position="91"/>
    </location>
    <ligand>
        <name>ATP</name>
        <dbReference type="ChEBI" id="CHEBI:30616"/>
    </ligand>
</feature>
<feature type="binding site" evidence="1">
    <location>
        <position position="415"/>
    </location>
    <ligand>
        <name>ATP</name>
        <dbReference type="ChEBI" id="CHEBI:30616"/>
    </ligand>
</feature>
<feature type="binding site" evidence="1">
    <location>
        <begin position="479"/>
        <end position="481"/>
    </location>
    <ligand>
        <name>ATP</name>
        <dbReference type="ChEBI" id="CHEBI:30616"/>
    </ligand>
</feature>
<feature type="binding site" evidence="1">
    <location>
        <position position="495"/>
    </location>
    <ligand>
        <name>ATP</name>
        <dbReference type="ChEBI" id="CHEBI:30616"/>
    </ligand>
</feature>
<gene>
    <name evidence="1" type="primary">groEL</name>
    <name evidence="1" type="synonym">groL</name>
    <name type="ordered locus">DvMF_3064</name>
</gene>
<evidence type="ECO:0000255" key="1">
    <source>
        <dbReference type="HAMAP-Rule" id="MF_00600"/>
    </source>
</evidence>
<keyword id="KW-0067">ATP-binding</keyword>
<keyword id="KW-0143">Chaperone</keyword>
<keyword id="KW-0963">Cytoplasm</keyword>
<keyword id="KW-0413">Isomerase</keyword>
<keyword id="KW-0547">Nucleotide-binding</keyword>
<protein>
    <recommendedName>
        <fullName evidence="1">Chaperonin GroEL</fullName>
        <ecNumber evidence="1">5.6.1.7</ecNumber>
    </recommendedName>
    <alternativeName>
        <fullName evidence="1">60 kDa chaperonin</fullName>
    </alternativeName>
    <alternativeName>
        <fullName evidence="1">Chaperonin-60</fullName>
        <shortName evidence="1">Cpn60</shortName>
    </alternativeName>
</protein>
<organism>
    <name type="scientific">Nitratidesulfovibrio vulgaris (strain DSM 19637 / Miyazaki F)</name>
    <name type="common">Desulfovibrio vulgaris</name>
    <dbReference type="NCBI Taxonomy" id="883"/>
    <lineage>
        <taxon>Bacteria</taxon>
        <taxon>Pseudomonadati</taxon>
        <taxon>Thermodesulfobacteriota</taxon>
        <taxon>Desulfovibrionia</taxon>
        <taxon>Desulfovibrionales</taxon>
        <taxon>Desulfovibrionaceae</taxon>
        <taxon>Nitratidesulfovibrio</taxon>
    </lineage>
</organism>
<accession>B8DJC4</accession>
<reference key="1">
    <citation type="submission" date="2008-10" db="EMBL/GenBank/DDBJ databases">
        <title>Complete sequence of Desulfovibrio vulgaris str. 'Miyazaki F'.</title>
        <authorList>
            <person name="Lucas S."/>
            <person name="Copeland A."/>
            <person name="Lapidus A."/>
            <person name="Glavina del Rio T."/>
            <person name="Dalin E."/>
            <person name="Tice H."/>
            <person name="Bruce D."/>
            <person name="Goodwin L."/>
            <person name="Pitluck S."/>
            <person name="Sims D."/>
            <person name="Brettin T."/>
            <person name="Detter J.C."/>
            <person name="Han C."/>
            <person name="Larimer F."/>
            <person name="Land M."/>
            <person name="Hauser L."/>
            <person name="Kyrpides N."/>
            <person name="Mikhailova N."/>
            <person name="Hazen T.C."/>
            <person name="Richardson P."/>
        </authorList>
    </citation>
    <scope>NUCLEOTIDE SEQUENCE [LARGE SCALE GENOMIC DNA]</scope>
    <source>
        <strain>DSM 19637 / Miyazaki F</strain>
    </source>
</reference>
<proteinExistence type="inferred from homology"/>
<name>CH60_NITV9</name>
<dbReference type="EC" id="5.6.1.7" evidence="1"/>
<dbReference type="EMBL" id="CP001197">
    <property type="protein sequence ID" value="ACL10001.1"/>
    <property type="molecule type" value="Genomic_DNA"/>
</dbReference>
<dbReference type="SMR" id="B8DJC4"/>
<dbReference type="STRING" id="883.DvMF_3064"/>
<dbReference type="KEGG" id="dvm:DvMF_3064"/>
<dbReference type="eggNOG" id="COG0459">
    <property type="taxonomic scope" value="Bacteria"/>
</dbReference>
<dbReference type="HOGENOM" id="CLU_016503_3_0_7"/>
<dbReference type="OrthoDB" id="9766614at2"/>
<dbReference type="GO" id="GO:0005737">
    <property type="term" value="C:cytoplasm"/>
    <property type="evidence" value="ECO:0007669"/>
    <property type="project" value="UniProtKB-SubCell"/>
</dbReference>
<dbReference type="GO" id="GO:0005524">
    <property type="term" value="F:ATP binding"/>
    <property type="evidence" value="ECO:0007669"/>
    <property type="project" value="UniProtKB-UniRule"/>
</dbReference>
<dbReference type="GO" id="GO:0140662">
    <property type="term" value="F:ATP-dependent protein folding chaperone"/>
    <property type="evidence" value="ECO:0007669"/>
    <property type="project" value="InterPro"/>
</dbReference>
<dbReference type="GO" id="GO:0016853">
    <property type="term" value="F:isomerase activity"/>
    <property type="evidence" value="ECO:0007669"/>
    <property type="project" value="UniProtKB-KW"/>
</dbReference>
<dbReference type="GO" id="GO:0051082">
    <property type="term" value="F:unfolded protein binding"/>
    <property type="evidence" value="ECO:0007669"/>
    <property type="project" value="UniProtKB-UniRule"/>
</dbReference>
<dbReference type="GO" id="GO:0042026">
    <property type="term" value="P:protein refolding"/>
    <property type="evidence" value="ECO:0007669"/>
    <property type="project" value="UniProtKB-UniRule"/>
</dbReference>
<dbReference type="CDD" id="cd03344">
    <property type="entry name" value="GroEL"/>
    <property type="match status" value="1"/>
</dbReference>
<dbReference type="FunFam" id="3.50.7.10:FF:000001">
    <property type="entry name" value="60 kDa chaperonin"/>
    <property type="match status" value="1"/>
</dbReference>
<dbReference type="Gene3D" id="3.50.7.10">
    <property type="entry name" value="GroEL"/>
    <property type="match status" value="1"/>
</dbReference>
<dbReference type="Gene3D" id="1.10.560.10">
    <property type="entry name" value="GroEL-like equatorial domain"/>
    <property type="match status" value="1"/>
</dbReference>
<dbReference type="Gene3D" id="3.30.260.10">
    <property type="entry name" value="TCP-1-like chaperonin intermediate domain"/>
    <property type="match status" value="1"/>
</dbReference>
<dbReference type="HAMAP" id="MF_00600">
    <property type="entry name" value="CH60"/>
    <property type="match status" value="1"/>
</dbReference>
<dbReference type="InterPro" id="IPR018370">
    <property type="entry name" value="Chaperonin_Cpn60_CS"/>
</dbReference>
<dbReference type="InterPro" id="IPR001844">
    <property type="entry name" value="Cpn60/GroEL"/>
</dbReference>
<dbReference type="InterPro" id="IPR002423">
    <property type="entry name" value="Cpn60/GroEL/TCP-1"/>
</dbReference>
<dbReference type="InterPro" id="IPR027409">
    <property type="entry name" value="GroEL-like_apical_dom_sf"/>
</dbReference>
<dbReference type="InterPro" id="IPR027413">
    <property type="entry name" value="GROEL-like_equatorial_sf"/>
</dbReference>
<dbReference type="InterPro" id="IPR027410">
    <property type="entry name" value="TCP-1-like_intermed_sf"/>
</dbReference>
<dbReference type="NCBIfam" id="TIGR02348">
    <property type="entry name" value="GroEL"/>
    <property type="match status" value="1"/>
</dbReference>
<dbReference type="NCBIfam" id="NF000592">
    <property type="entry name" value="PRK00013.1"/>
    <property type="match status" value="1"/>
</dbReference>
<dbReference type="NCBIfam" id="NF009487">
    <property type="entry name" value="PRK12849.1"/>
    <property type="match status" value="1"/>
</dbReference>
<dbReference type="NCBIfam" id="NF009488">
    <property type="entry name" value="PRK12850.1"/>
    <property type="match status" value="1"/>
</dbReference>
<dbReference type="NCBIfam" id="NF009489">
    <property type="entry name" value="PRK12851.1"/>
    <property type="match status" value="1"/>
</dbReference>
<dbReference type="PANTHER" id="PTHR45633">
    <property type="entry name" value="60 KDA HEAT SHOCK PROTEIN, MITOCHONDRIAL"/>
    <property type="match status" value="1"/>
</dbReference>
<dbReference type="Pfam" id="PF00118">
    <property type="entry name" value="Cpn60_TCP1"/>
    <property type="match status" value="1"/>
</dbReference>
<dbReference type="PRINTS" id="PR00298">
    <property type="entry name" value="CHAPERONIN60"/>
</dbReference>
<dbReference type="SUPFAM" id="SSF52029">
    <property type="entry name" value="GroEL apical domain-like"/>
    <property type="match status" value="1"/>
</dbReference>
<dbReference type="SUPFAM" id="SSF48592">
    <property type="entry name" value="GroEL equatorial domain-like"/>
    <property type="match status" value="1"/>
</dbReference>
<dbReference type="SUPFAM" id="SSF54849">
    <property type="entry name" value="GroEL-intermediate domain like"/>
    <property type="match status" value="1"/>
</dbReference>
<dbReference type="PROSITE" id="PS00296">
    <property type="entry name" value="CHAPERONINS_CPN60"/>
    <property type="match status" value="1"/>
</dbReference>